<reference key="1">
    <citation type="journal article" date="2005" name="Nature">
        <title>The map-based sequence of the rice genome.</title>
        <authorList>
            <consortium name="International rice genome sequencing project (IRGSP)"/>
        </authorList>
    </citation>
    <scope>NUCLEOTIDE SEQUENCE [LARGE SCALE GENOMIC DNA]</scope>
    <source>
        <strain>cv. Nipponbare</strain>
    </source>
</reference>
<reference key="2">
    <citation type="journal article" date="2008" name="Nucleic Acids Res.">
        <title>The rice annotation project database (RAP-DB): 2008 update.</title>
        <authorList>
            <consortium name="The rice annotation project (RAP)"/>
        </authorList>
    </citation>
    <scope>GENOME REANNOTATION</scope>
    <source>
        <strain>cv. Nipponbare</strain>
    </source>
</reference>
<reference key="3">
    <citation type="journal article" date="2013" name="Rice">
        <title>Improvement of the Oryza sativa Nipponbare reference genome using next generation sequence and optical map data.</title>
        <authorList>
            <person name="Kawahara Y."/>
            <person name="de la Bastide M."/>
            <person name="Hamilton J.P."/>
            <person name="Kanamori H."/>
            <person name="McCombie W.R."/>
            <person name="Ouyang S."/>
            <person name="Schwartz D.C."/>
            <person name="Tanaka T."/>
            <person name="Wu J."/>
            <person name="Zhou S."/>
            <person name="Childs K.L."/>
            <person name="Davidson R.M."/>
            <person name="Lin H."/>
            <person name="Quesada-Ocampo L."/>
            <person name="Vaillancourt B."/>
            <person name="Sakai H."/>
            <person name="Lee S.S."/>
            <person name="Kim J."/>
            <person name="Numa H."/>
            <person name="Itoh T."/>
            <person name="Buell C.R."/>
            <person name="Matsumoto T."/>
        </authorList>
    </citation>
    <scope>GENOME REANNOTATION</scope>
    <source>
        <strain>cv. Nipponbare</strain>
    </source>
</reference>
<reference key="4">
    <citation type="journal article" date="2003" name="Science">
        <title>Collection, mapping, and annotation of over 28,000 cDNA clones from japonica rice.</title>
        <authorList>
            <consortium name="The rice full-length cDNA consortium"/>
        </authorList>
    </citation>
    <scope>NUCLEOTIDE SEQUENCE [LARGE SCALE MRNA]</scope>
    <source>
        <strain>cv. Nipponbare</strain>
    </source>
</reference>
<reference key="5">
    <citation type="journal article" date="2007" name="BMC Plant Biol.">
        <title>Genome-wide identification and analyses of the rice calmodulin and related potential calcium sensor proteins.</title>
        <authorList>
            <person name="Boonburapong B."/>
            <person name="Buaboocha T."/>
        </authorList>
    </citation>
    <scope>GENE FAMILY</scope>
    <scope>NOMENCLATURE</scope>
</reference>
<gene>
    <name type="primary">CML30</name>
    <name type="ordered locus">Os06g0172200</name>
    <name type="ordered locus">LOC_Os06g07560</name>
    <name type="ORF">OSJNBa0014B15.8</name>
</gene>
<comment type="function">
    <text evidence="1">Potential calcium sensor.</text>
</comment>
<comment type="caution">
    <text evidence="4">Although assigned as a calmodulin family member by PubMed:17263873, it only contains EF-hand domains.</text>
</comment>
<evidence type="ECO:0000250" key="1"/>
<evidence type="ECO:0000255" key="2">
    <source>
        <dbReference type="PROSITE-ProRule" id="PRU00448"/>
    </source>
</evidence>
<evidence type="ECO:0000256" key="3">
    <source>
        <dbReference type="SAM" id="MobiDB-lite"/>
    </source>
</evidence>
<evidence type="ECO:0000305" key="4"/>
<sequence length="236" mass="25745">MAPLLLLFLLGGLCALFSLASSSPATKKCGDAKKRREEEGEEVVVVAKKRPEEEPRRPDPDADLGIVFSTFDHDGDGFITAAELEESLKRLGIAVSSAAEAAALVARVDANSDGLIDIHEFRELYDSIPKRRKSHQQHPLPSTAAADEEAAAADEEYEAEEEERDLREAFDVFDGNKDGLISAEELGTVLESLGLRQHGGRPAVAECRDMIRLVDSDGDGMVSFEEFKRMMTVVKA</sequence>
<feature type="chain" id="PRO_0000338444" description="Probable calcium-binding protein CML30">
    <location>
        <begin position="1"/>
        <end position="236"/>
    </location>
</feature>
<feature type="domain" description="EF-hand 1" evidence="2">
    <location>
        <begin position="59"/>
        <end position="94"/>
    </location>
</feature>
<feature type="domain" description="EF-hand 2" evidence="2">
    <location>
        <begin position="96"/>
        <end position="131"/>
    </location>
</feature>
<feature type="domain" description="EF-hand 3" evidence="2">
    <location>
        <begin position="161"/>
        <end position="196"/>
    </location>
</feature>
<feature type="domain" description="EF-hand 4" evidence="2">
    <location>
        <begin position="202"/>
        <end position="236"/>
    </location>
</feature>
<feature type="region of interest" description="Disordered" evidence="3">
    <location>
        <begin position="43"/>
        <end position="64"/>
    </location>
</feature>
<feature type="region of interest" description="Disordered" evidence="3">
    <location>
        <begin position="130"/>
        <end position="158"/>
    </location>
</feature>
<feature type="compositionally biased region" description="Basic and acidic residues" evidence="3">
    <location>
        <begin position="49"/>
        <end position="60"/>
    </location>
</feature>
<feature type="compositionally biased region" description="Acidic residues" evidence="3">
    <location>
        <begin position="146"/>
        <end position="158"/>
    </location>
</feature>
<feature type="binding site" evidence="2">
    <location>
        <position position="72"/>
    </location>
    <ligand>
        <name>Ca(2+)</name>
        <dbReference type="ChEBI" id="CHEBI:29108"/>
        <label>1</label>
    </ligand>
</feature>
<feature type="binding site" evidence="2">
    <location>
        <position position="74"/>
    </location>
    <ligand>
        <name>Ca(2+)</name>
        <dbReference type="ChEBI" id="CHEBI:29108"/>
        <label>1</label>
    </ligand>
</feature>
<feature type="binding site" evidence="2">
    <location>
        <position position="76"/>
    </location>
    <ligand>
        <name>Ca(2+)</name>
        <dbReference type="ChEBI" id="CHEBI:29108"/>
        <label>1</label>
    </ligand>
</feature>
<feature type="binding site" evidence="2">
    <location>
        <position position="83"/>
    </location>
    <ligand>
        <name>Ca(2+)</name>
        <dbReference type="ChEBI" id="CHEBI:29108"/>
        <label>1</label>
    </ligand>
</feature>
<feature type="binding site" evidence="2">
    <location>
        <position position="109"/>
    </location>
    <ligand>
        <name>Ca(2+)</name>
        <dbReference type="ChEBI" id="CHEBI:29108"/>
        <label>2</label>
    </ligand>
</feature>
<feature type="binding site" evidence="2">
    <location>
        <position position="111"/>
    </location>
    <ligand>
        <name>Ca(2+)</name>
        <dbReference type="ChEBI" id="CHEBI:29108"/>
        <label>2</label>
    </ligand>
</feature>
<feature type="binding site" evidence="2">
    <location>
        <position position="113"/>
    </location>
    <ligand>
        <name>Ca(2+)</name>
        <dbReference type="ChEBI" id="CHEBI:29108"/>
        <label>2</label>
    </ligand>
</feature>
<feature type="binding site" evidence="2">
    <location>
        <position position="120"/>
    </location>
    <ligand>
        <name>Ca(2+)</name>
        <dbReference type="ChEBI" id="CHEBI:29108"/>
        <label>2</label>
    </ligand>
</feature>
<feature type="binding site" evidence="2">
    <location>
        <position position="174"/>
    </location>
    <ligand>
        <name>Ca(2+)</name>
        <dbReference type="ChEBI" id="CHEBI:29108"/>
        <label>3</label>
    </ligand>
</feature>
<feature type="binding site" evidence="2">
    <location>
        <position position="176"/>
    </location>
    <ligand>
        <name>Ca(2+)</name>
        <dbReference type="ChEBI" id="CHEBI:29108"/>
        <label>3</label>
    </ligand>
</feature>
<feature type="binding site" evidence="2">
    <location>
        <position position="178"/>
    </location>
    <ligand>
        <name>Ca(2+)</name>
        <dbReference type="ChEBI" id="CHEBI:29108"/>
        <label>3</label>
    </ligand>
</feature>
<feature type="binding site" evidence="2">
    <location>
        <position position="185"/>
    </location>
    <ligand>
        <name>Ca(2+)</name>
        <dbReference type="ChEBI" id="CHEBI:29108"/>
        <label>3</label>
    </ligand>
</feature>
<feature type="binding site" evidence="2">
    <location>
        <position position="215"/>
    </location>
    <ligand>
        <name>Ca(2+)</name>
        <dbReference type="ChEBI" id="CHEBI:29108"/>
        <label>4</label>
    </ligand>
</feature>
<feature type="binding site" evidence="2">
    <location>
        <position position="217"/>
    </location>
    <ligand>
        <name>Ca(2+)</name>
        <dbReference type="ChEBI" id="CHEBI:29108"/>
        <label>4</label>
    </ligand>
</feature>
<feature type="binding site" evidence="2">
    <location>
        <position position="219"/>
    </location>
    <ligand>
        <name>Ca(2+)</name>
        <dbReference type="ChEBI" id="CHEBI:29108"/>
        <label>4</label>
    </ligand>
</feature>
<feature type="binding site" evidence="2">
    <location>
        <position position="221"/>
    </location>
    <ligand>
        <name>Ca(2+)</name>
        <dbReference type="ChEBI" id="CHEBI:29108"/>
        <label>4</label>
    </ligand>
</feature>
<feature type="binding site" evidence="2">
    <location>
        <position position="226"/>
    </location>
    <ligand>
        <name>Ca(2+)</name>
        <dbReference type="ChEBI" id="CHEBI:29108"/>
        <label>4</label>
    </ligand>
</feature>
<accession>Q5SND2</accession>
<accession>B7EIB4</accession>
<proteinExistence type="evidence at transcript level"/>
<dbReference type="EMBL" id="AP002854">
    <property type="protein sequence ID" value="BAD72274.1"/>
    <property type="molecule type" value="Genomic_DNA"/>
</dbReference>
<dbReference type="EMBL" id="AP008212">
    <property type="protein sequence ID" value="BAF18854.1"/>
    <property type="molecule type" value="Genomic_DNA"/>
</dbReference>
<dbReference type="EMBL" id="AP014962">
    <property type="protein sequence ID" value="BAS96390.1"/>
    <property type="molecule type" value="Genomic_DNA"/>
</dbReference>
<dbReference type="EMBL" id="AK070725">
    <property type="protein sequence ID" value="BAG92111.1"/>
    <property type="molecule type" value="mRNA"/>
</dbReference>
<dbReference type="EMBL" id="AK105920">
    <property type="protein sequence ID" value="BAG97442.1"/>
    <property type="molecule type" value="mRNA"/>
</dbReference>
<dbReference type="RefSeq" id="XP_015641327.1">
    <property type="nucleotide sequence ID" value="XM_015785841.1"/>
</dbReference>
<dbReference type="SMR" id="Q5SND2"/>
<dbReference type="STRING" id="39947.Q5SND2"/>
<dbReference type="PaxDb" id="39947-Q5SND2"/>
<dbReference type="EnsemblPlants" id="Os06t0172200-02">
    <property type="protein sequence ID" value="Os06t0172200-02"/>
    <property type="gene ID" value="Os06g0172200"/>
</dbReference>
<dbReference type="Gramene" id="Os06t0172200-02">
    <property type="protein sequence ID" value="Os06t0172200-02"/>
    <property type="gene ID" value="Os06g0172200"/>
</dbReference>
<dbReference type="KEGG" id="dosa:Os06g0172200"/>
<dbReference type="eggNOG" id="KOG0027">
    <property type="taxonomic scope" value="Eukaryota"/>
</dbReference>
<dbReference type="HOGENOM" id="CLU_061288_20_3_1"/>
<dbReference type="InParanoid" id="Q5SND2"/>
<dbReference type="OMA" id="LLTSECM"/>
<dbReference type="OrthoDB" id="26525at2759"/>
<dbReference type="Proteomes" id="UP000000763">
    <property type="component" value="Chromosome 6"/>
</dbReference>
<dbReference type="Proteomes" id="UP000059680">
    <property type="component" value="Chromosome 6"/>
</dbReference>
<dbReference type="GO" id="GO:0005509">
    <property type="term" value="F:calcium ion binding"/>
    <property type="evidence" value="ECO:0000318"/>
    <property type="project" value="GO_Central"/>
</dbReference>
<dbReference type="CDD" id="cd00051">
    <property type="entry name" value="EFh"/>
    <property type="match status" value="1"/>
</dbReference>
<dbReference type="FunFam" id="1.10.238.10:FF:000458">
    <property type="entry name" value="Probable calcium-binding protein CML30"/>
    <property type="match status" value="1"/>
</dbReference>
<dbReference type="FunFam" id="1.10.238.10:FF:000502">
    <property type="entry name" value="Probable calcium-binding protein CML30"/>
    <property type="match status" value="1"/>
</dbReference>
<dbReference type="Gene3D" id="1.10.238.10">
    <property type="entry name" value="EF-hand"/>
    <property type="match status" value="2"/>
</dbReference>
<dbReference type="InterPro" id="IPR011992">
    <property type="entry name" value="EF-hand-dom_pair"/>
</dbReference>
<dbReference type="InterPro" id="IPR018247">
    <property type="entry name" value="EF_Hand_1_Ca_BS"/>
</dbReference>
<dbReference type="InterPro" id="IPR002048">
    <property type="entry name" value="EF_hand_dom"/>
</dbReference>
<dbReference type="InterPro" id="IPR039647">
    <property type="entry name" value="EF_hand_pair_protein_CML-like"/>
</dbReference>
<dbReference type="PANTHER" id="PTHR10891">
    <property type="entry name" value="EF-HAND CALCIUM-BINDING DOMAIN CONTAINING PROTEIN"/>
    <property type="match status" value="1"/>
</dbReference>
<dbReference type="Pfam" id="PF13499">
    <property type="entry name" value="EF-hand_7"/>
    <property type="match status" value="2"/>
</dbReference>
<dbReference type="SMART" id="SM00054">
    <property type="entry name" value="EFh"/>
    <property type="match status" value="4"/>
</dbReference>
<dbReference type="SUPFAM" id="SSF47473">
    <property type="entry name" value="EF-hand"/>
    <property type="match status" value="1"/>
</dbReference>
<dbReference type="PROSITE" id="PS00018">
    <property type="entry name" value="EF_HAND_1"/>
    <property type="match status" value="4"/>
</dbReference>
<dbReference type="PROSITE" id="PS50222">
    <property type="entry name" value="EF_HAND_2"/>
    <property type="match status" value="4"/>
</dbReference>
<name>CML30_ORYSJ</name>
<organism>
    <name type="scientific">Oryza sativa subsp. japonica</name>
    <name type="common">Rice</name>
    <dbReference type="NCBI Taxonomy" id="39947"/>
    <lineage>
        <taxon>Eukaryota</taxon>
        <taxon>Viridiplantae</taxon>
        <taxon>Streptophyta</taxon>
        <taxon>Embryophyta</taxon>
        <taxon>Tracheophyta</taxon>
        <taxon>Spermatophyta</taxon>
        <taxon>Magnoliopsida</taxon>
        <taxon>Liliopsida</taxon>
        <taxon>Poales</taxon>
        <taxon>Poaceae</taxon>
        <taxon>BOP clade</taxon>
        <taxon>Oryzoideae</taxon>
        <taxon>Oryzeae</taxon>
        <taxon>Oryzinae</taxon>
        <taxon>Oryza</taxon>
        <taxon>Oryza sativa</taxon>
    </lineage>
</organism>
<protein>
    <recommendedName>
        <fullName>Probable calcium-binding protein CML30</fullName>
    </recommendedName>
    <alternativeName>
        <fullName>Calmodulin-like protein 30</fullName>
    </alternativeName>
</protein>
<keyword id="KW-0106">Calcium</keyword>
<keyword id="KW-0479">Metal-binding</keyword>
<keyword id="KW-1185">Reference proteome</keyword>
<keyword id="KW-0677">Repeat</keyword>